<protein>
    <recommendedName>
        <fullName evidence="7">Transmembrane protein 268</fullName>
    </recommendedName>
</protein>
<proteinExistence type="evidence at transcript level"/>
<name>TM268_MOUSE</name>
<organism>
    <name type="scientific">Mus musculus</name>
    <name type="common">Mouse</name>
    <dbReference type="NCBI Taxonomy" id="10090"/>
    <lineage>
        <taxon>Eukaryota</taxon>
        <taxon>Metazoa</taxon>
        <taxon>Chordata</taxon>
        <taxon>Craniata</taxon>
        <taxon>Vertebrata</taxon>
        <taxon>Euteleostomi</taxon>
        <taxon>Mammalia</taxon>
        <taxon>Eutheria</taxon>
        <taxon>Euarchontoglires</taxon>
        <taxon>Glires</taxon>
        <taxon>Rodentia</taxon>
        <taxon>Myomorpha</taxon>
        <taxon>Muroidea</taxon>
        <taxon>Muridae</taxon>
        <taxon>Murinae</taxon>
        <taxon>Mus</taxon>
        <taxon>Mus</taxon>
    </lineage>
</organism>
<comment type="function">
    <text evidence="1">Stabilizes cell surface expression of ITGAM and participates in the adhesion and migration of phagocytes during bacterial clearance.</text>
</comment>
<comment type="subunit">
    <text evidence="1">Interacts with ITGAM; this interaction inhibits ITGAM degradation via the endosome-lysosome pathway. Interacts with ITGB4; this interaction prevents ITGB4 degradation.</text>
</comment>
<comment type="subcellular location">
    <subcellularLocation>
        <location evidence="1">Cell membrane</location>
        <topology evidence="1">Multi-pass membrane protein</topology>
    </subcellularLocation>
</comment>
<comment type="alternative products">
    <event type="alternative splicing"/>
    <isoform>
        <id>Q8R239-1</id>
        <name>1</name>
        <sequence type="displayed"/>
    </isoform>
    <isoform>
        <id>Q8R239-2</id>
        <name>2</name>
        <sequence type="described" ref="VSP_023429 VSP_023430"/>
    </isoform>
    <isoform>
        <id>Q8R239-3</id>
        <name>3</name>
        <sequence type="described" ref="VSP_023428"/>
    </isoform>
</comment>
<comment type="disruption phenotype">
    <text evidence="4">Homozygous knockout mice for Tmem268 show a significantly higher mortality than their littermates; at 24 h after cecal ligation and puncture (CLP), 43% of all mice die (PubMed:38730209). At 231 h after CLP, only 14% of mice are alive (PubMed:38730209). Mice show significantly higher bacterial burden in lung, liver, kidney, blood, and peritoneal cavity (PubMed:38730209).</text>
</comment>
<comment type="sequence caution" evidence="6">
    <conflict type="frameshift">
        <sequence resource="EMBL-CDS" id="AAH23748"/>
    </conflict>
</comment>
<comment type="sequence caution" evidence="6">
    <conflict type="erroneous gene model prediction">
        <sequence resource="EMBL-CDS" id="CAD62270"/>
    </conflict>
</comment>
<comment type="sequence caution" evidence="6">
    <conflict type="erroneous gene model prediction">
        <sequence resource="EMBL-CDS" id="CAD62271"/>
    </conflict>
</comment>
<keyword id="KW-0025">Alternative splicing</keyword>
<keyword id="KW-1003">Cell membrane</keyword>
<keyword id="KW-0472">Membrane</keyword>
<keyword id="KW-1185">Reference proteome</keyword>
<keyword id="KW-0812">Transmembrane</keyword>
<keyword id="KW-1133">Transmembrane helix</keyword>
<gene>
    <name evidence="7" type="primary">Tmem268</name>
</gene>
<dbReference type="EMBL" id="AK030466">
    <property type="protein sequence ID" value="BAC26975.1"/>
    <property type="molecule type" value="mRNA"/>
</dbReference>
<dbReference type="EMBL" id="AK031016">
    <property type="protein sequence ID" value="BAC27214.1"/>
    <property type="molecule type" value="mRNA"/>
</dbReference>
<dbReference type="EMBL" id="AK144990">
    <property type="protein sequence ID" value="BAE26173.1"/>
    <property type="molecule type" value="mRNA"/>
</dbReference>
<dbReference type="EMBL" id="AK161160">
    <property type="protein sequence ID" value="BAE36221.1"/>
    <property type="molecule type" value="mRNA"/>
</dbReference>
<dbReference type="EMBL" id="AL691484">
    <property type="protein sequence ID" value="CAD62270.1"/>
    <property type="status" value="ALT_SEQ"/>
    <property type="molecule type" value="Genomic_DNA"/>
</dbReference>
<dbReference type="EMBL" id="AL691484">
    <property type="protein sequence ID" value="CAD62271.1"/>
    <property type="status" value="ALT_SEQ"/>
    <property type="molecule type" value="Genomic_DNA"/>
</dbReference>
<dbReference type="EMBL" id="AL691484">
    <property type="protein sequence ID" value="CAD62272.1"/>
    <property type="molecule type" value="Genomic_DNA"/>
</dbReference>
<dbReference type="EMBL" id="BC022599">
    <property type="protein sequence ID" value="AAH22599.2"/>
    <property type="molecule type" value="mRNA"/>
</dbReference>
<dbReference type="EMBL" id="BC023748">
    <property type="protein sequence ID" value="AAH23748.1"/>
    <property type="status" value="ALT_FRAME"/>
    <property type="molecule type" value="mRNA"/>
</dbReference>
<dbReference type="CCDS" id="CCDS18261.1">
    <molecule id="Q8R239-1"/>
</dbReference>
<dbReference type="RefSeq" id="NP_001343283.1">
    <molecule id="Q8R239-1"/>
    <property type="nucleotide sequence ID" value="NM_001356354.1"/>
</dbReference>
<dbReference type="RefSeq" id="NP_001343284.1">
    <molecule id="Q8R239-1"/>
    <property type="nucleotide sequence ID" value="NM_001356355.1"/>
</dbReference>
<dbReference type="RefSeq" id="NP_659154.2">
    <molecule id="Q8R239-1"/>
    <property type="nucleotide sequence ID" value="NM_144905.3"/>
</dbReference>
<dbReference type="RefSeq" id="XP_006537929.1">
    <property type="nucleotide sequence ID" value="XM_006537866.2"/>
</dbReference>
<dbReference type="RefSeq" id="XP_006537930.1">
    <molecule id="Q8R239-1"/>
    <property type="nucleotide sequence ID" value="XM_006537867.4"/>
</dbReference>
<dbReference type="RefSeq" id="XP_006537931.1">
    <molecule id="Q8R239-1"/>
    <property type="nucleotide sequence ID" value="XM_006537868.5"/>
</dbReference>
<dbReference type="RefSeq" id="XP_006537932.1">
    <molecule id="Q8R239-1"/>
    <property type="nucleotide sequence ID" value="XM_006537869.1"/>
</dbReference>
<dbReference type="RefSeq" id="XP_006537933.1">
    <molecule id="Q8R239-1"/>
    <property type="nucleotide sequence ID" value="XM_006537870.4"/>
</dbReference>
<dbReference type="RefSeq" id="XP_006537934.1">
    <molecule id="Q8R239-1"/>
    <property type="nucleotide sequence ID" value="XM_006537871.4"/>
</dbReference>
<dbReference type="RefSeq" id="XP_006537935.1">
    <molecule id="Q8R239-1"/>
    <property type="nucleotide sequence ID" value="XM_006537872.4"/>
</dbReference>
<dbReference type="RefSeq" id="XP_006537936.1">
    <molecule id="Q8R239-1"/>
    <property type="nucleotide sequence ID" value="XM_006537873.4"/>
</dbReference>
<dbReference type="RefSeq" id="XP_011248311.1">
    <property type="nucleotide sequence ID" value="XM_011250009.2"/>
</dbReference>
<dbReference type="BioGRID" id="230954">
    <property type="interactions" value="1"/>
</dbReference>
<dbReference type="FunCoup" id="Q8R239">
    <property type="interactions" value="34"/>
</dbReference>
<dbReference type="STRING" id="10090.ENSMUSP00000076891"/>
<dbReference type="GlyGen" id="Q8R239">
    <property type="glycosylation" value="1 site"/>
</dbReference>
<dbReference type="PhosphoSitePlus" id="Q8R239"/>
<dbReference type="PaxDb" id="10090-ENSMUSP00000076891"/>
<dbReference type="PeptideAtlas" id="Q8R239"/>
<dbReference type="ProteomicsDB" id="259109">
    <molecule id="Q8R239-1"/>
</dbReference>
<dbReference type="ProteomicsDB" id="259110">
    <molecule id="Q8R239-2"/>
</dbReference>
<dbReference type="ProteomicsDB" id="259111">
    <molecule id="Q8R239-3"/>
</dbReference>
<dbReference type="Antibodypedia" id="15584">
    <property type="antibodies" value="85 antibodies from 15 providers"/>
</dbReference>
<dbReference type="DNASU" id="230279"/>
<dbReference type="Ensembl" id="ENSMUST00000077709.11">
    <molecule id="Q8R239-1"/>
    <property type="protein sequence ID" value="ENSMUSP00000076891.5"/>
    <property type="gene ID" value="ENSMUSG00000045917.18"/>
</dbReference>
<dbReference type="Ensembl" id="ENSMUST00000080336.4">
    <molecule id="Q8R239-1"/>
    <property type="protein sequence ID" value="ENSMUSP00000079211.3"/>
    <property type="gene ID" value="ENSMUSG00000045917.18"/>
</dbReference>
<dbReference type="GeneID" id="230279"/>
<dbReference type="KEGG" id="mmu:230279"/>
<dbReference type="UCSC" id="uc008tgs.1">
    <molecule id="Q8R239-1"/>
    <property type="organism name" value="mouse"/>
</dbReference>
<dbReference type="AGR" id="MGI:1913920"/>
<dbReference type="CTD" id="203197"/>
<dbReference type="MGI" id="MGI:1913920">
    <property type="gene designation" value="Tmem268"/>
</dbReference>
<dbReference type="VEuPathDB" id="HostDB:ENSMUSG00000045917"/>
<dbReference type="eggNOG" id="ENOG502R635">
    <property type="taxonomic scope" value="Eukaryota"/>
</dbReference>
<dbReference type="GeneTree" id="ENSGT00390000011559"/>
<dbReference type="HOGENOM" id="CLU_067585_1_0_1"/>
<dbReference type="InParanoid" id="Q8R239"/>
<dbReference type="OMA" id="YVTLWIN"/>
<dbReference type="OrthoDB" id="8250049at2759"/>
<dbReference type="PhylomeDB" id="Q8R239"/>
<dbReference type="TreeFam" id="TF353168"/>
<dbReference type="BioGRID-ORCS" id="230279">
    <property type="hits" value="1 hit in 77 CRISPR screens"/>
</dbReference>
<dbReference type="PRO" id="PR:Q8R239"/>
<dbReference type="Proteomes" id="UP000000589">
    <property type="component" value="Chromosome 4"/>
</dbReference>
<dbReference type="RNAct" id="Q8R239">
    <property type="molecule type" value="protein"/>
</dbReference>
<dbReference type="Bgee" id="ENSMUSG00000045917">
    <property type="expression patterns" value="Expressed in substantia nigra and 206 other cell types or tissues"/>
</dbReference>
<dbReference type="ExpressionAtlas" id="Q8R239">
    <property type="expression patterns" value="baseline and differential"/>
</dbReference>
<dbReference type="GO" id="GO:0005886">
    <property type="term" value="C:plasma membrane"/>
    <property type="evidence" value="ECO:0007669"/>
    <property type="project" value="UniProtKB-SubCell"/>
</dbReference>
<dbReference type="InterPro" id="IPR028054">
    <property type="entry name" value="DUF4481"/>
</dbReference>
<dbReference type="PANTHER" id="PTHR31193:SF1">
    <property type="entry name" value="TRANSMEMBRANE PROTEIN 268"/>
    <property type="match status" value="1"/>
</dbReference>
<dbReference type="PANTHER" id="PTHR31193">
    <property type="entry name" value="TRANSMEMBRANE PROTEIN C9ORF91"/>
    <property type="match status" value="1"/>
</dbReference>
<dbReference type="Pfam" id="PF14800">
    <property type="entry name" value="DUF4481"/>
    <property type="match status" value="1"/>
</dbReference>
<reference key="1">
    <citation type="journal article" date="2005" name="Science">
        <title>The transcriptional landscape of the mammalian genome.</title>
        <authorList>
            <person name="Carninci P."/>
            <person name="Kasukawa T."/>
            <person name="Katayama S."/>
            <person name="Gough J."/>
            <person name="Frith M.C."/>
            <person name="Maeda N."/>
            <person name="Oyama R."/>
            <person name="Ravasi T."/>
            <person name="Lenhard B."/>
            <person name="Wells C."/>
            <person name="Kodzius R."/>
            <person name="Shimokawa K."/>
            <person name="Bajic V.B."/>
            <person name="Brenner S.E."/>
            <person name="Batalov S."/>
            <person name="Forrest A.R."/>
            <person name="Zavolan M."/>
            <person name="Davis M.J."/>
            <person name="Wilming L.G."/>
            <person name="Aidinis V."/>
            <person name="Allen J.E."/>
            <person name="Ambesi-Impiombato A."/>
            <person name="Apweiler R."/>
            <person name="Aturaliya R.N."/>
            <person name="Bailey T.L."/>
            <person name="Bansal M."/>
            <person name="Baxter L."/>
            <person name="Beisel K.W."/>
            <person name="Bersano T."/>
            <person name="Bono H."/>
            <person name="Chalk A.M."/>
            <person name="Chiu K.P."/>
            <person name="Choudhary V."/>
            <person name="Christoffels A."/>
            <person name="Clutterbuck D.R."/>
            <person name="Crowe M.L."/>
            <person name="Dalla E."/>
            <person name="Dalrymple B.P."/>
            <person name="de Bono B."/>
            <person name="Della Gatta G."/>
            <person name="di Bernardo D."/>
            <person name="Down T."/>
            <person name="Engstrom P."/>
            <person name="Fagiolini M."/>
            <person name="Faulkner G."/>
            <person name="Fletcher C.F."/>
            <person name="Fukushima T."/>
            <person name="Furuno M."/>
            <person name="Futaki S."/>
            <person name="Gariboldi M."/>
            <person name="Georgii-Hemming P."/>
            <person name="Gingeras T.R."/>
            <person name="Gojobori T."/>
            <person name="Green R.E."/>
            <person name="Gustincich S."/>
            <person name="Harbers M."/>
            <person name="Hayashi Y."/>
            <person name="Hensch T.K."/>
            <person name="Hirokawa N."/>
            <person name="Hill D."/>
            <person name="Huminiecki L."/>
            <person name="Iacono M."/>
            <person name="Ikeo K."/>
            <person name="Iwama A."/>
            <person name="Ishikawa T."/>
            <person name="Jakt M."/>
            <person name="Kanapin A."/>
            <person name="Katoh M."/>
            <person name="Kawasawa Y."/>
            <person name="Kelso J."/>
            <person name="Kitamura H."/>
            <person name="Kitano H."/>
            <person name="Kollias G."/>
            <person name="Krishnan S.P."/>
            <person name="Kruger A."/>
            <person name="Kummerfeld S.K."/>
            <person name="Kurochkin I.V."/>
            <person name="Lareau L.F."/>
            <person name="Lazarevic D."/>
            <person name="Lipovich L."/>
            <person name="Liu J."/>
            <person name="Liuni S."/>
            <person name="McWilliam S."/>
            <person name="Madan Babu M."/>
            <person name="Madera M."/>
            <person name="Marchionni L."/>
            <person name="Matsuda H."/>
            <person name="Matsuzawa S."/>
            <person name="Miki H."/>
            <person name="Mignone F."/>
            <person name="Miyake S."/>
            <person name="Morris K."/>
            <person name="Mottagui-Tabar S."/>
            <person name="Mulder N."/>
            <person name="Nakano N."/>
            <person name="Nakauchi H."/>
            <person name="Ng P."/>
            <person name="Nilsson R."/>
            <person name="Nishiguchi S."/>
            <person name="Nishikawa S."/>
            <person name="Nori F."/>
            <person name="Ohara O."/>
            <person name="Okazaki Y."/>
            <person name="Orlando V."/>
            <person name="Pang K.C."/>
            <person name="Pavan W.J."/>
            <person name="Pavesi G."/>
            <person name="Pesole G."/>
            <person name="Petrovsky N."/>
            <person name="Piazza S."/>
            <person name="Reed J."/>
            <person name="Reid J.F."/>
            <person name="Ring B.Z."/>
            <person name="Ringwald M."/>
            <person name="Rost B."/>
            <person name="Ruan Y."/>
            <person name="Salzberg S.L."/>
            <person name="Sandelin A."/>
            <person name="Schneider C."/>
            <person name="Schoenbach C."/>
            <person name="Sekiguchi K."/>
            <person name="Semple C.A."/>
            <person name="Seno S."/>
            <person name="Sessa L."/>
            <person name="Sheng Y."/>
            <person name="Shibata Y."/>
            <person name="Shimada H."/>
            <person name="Shimada K."/>
            <person name="Silva D."/>
            <person name="Sinclair B."/>
            <person name="Sperling S."/>
            <person name="Stupka E."/>
            <person name="Sugiura K."/>
            <person name="Sultana R."/>
            <person name="Takenaka Y."/>
            <person name="Taki K."/>
            <person name="Tammoja K."/>
            <person name="Tan S.L."/>
            <person name="Tang S."/>
            <person name="Taylor M.S."/>
            <person name="Tegner J."/>
            <person name="Teichmann S.A."/>
            <person name="Ueda H.R."/>
            <person name="van Nimwegen E."/>
            <person name="Verardo R."/>
            <person name="Wei C.L."/>
            <person name="Yagi K."/>
            <person name="Yamanishi H."/>
            <person name="Zabarovsky E."/>
            <person name="Zhu S."/>
            <person name="Zimmer A."/>
            <person name="Hide W."/>
            <person name="Bult C."/>
            <person name="Grimmond S.M."/>
            <person name="Teasdale R.D."/>
            <person name="Liu E.T."/>
            <person name="Brusic V."/>
            <person name="Quackenbush J."/>
            <person name="Wahlestedt C."/>
            <person name="Mattick J.S."/>
            <person name="Hume D.A."/>
            <person name="Kai C."/>
            <person name="Sasaki D."/>
            <person name="Tomaru Y."/>
            <person name="Fukuda S."/>
            <person name="Kanamori-Katayama M."/>
            <person name="Suzuki M."/>
            <person name="Aoki J."/>
            <person name="Arakawa T."/>
            <person name="Iida J."/>
            <person name="Imamura K."/>
            <person name="Itoh M."/>
            <person name="Kato T."/>
            <person name="Kawaji H."/>
            <person name="Kawagashira N."/>
            <person name="Kawashima T."/>
            <person name="Kojima M."/>
            <person name="Kondo S."/>
            <person name="Konno H."/>
            <person name="Nakano K."/>
            <person name="Ninomiya N."/>
            <person name="Nishio T."/>
            <person name="Okada M."/>
            <person name="Plessy C."/>
            <person name="Shibata K."/>
            <person name="Shiraki T."/>
            <person name="Suzuki S."/>
            <person name="Tagami M."/>
            <person name="Waki K."/>
            <person name="Watahiki A."/>
            <person name="Okamura-Oho Y."/>
            <person name="Suzuki H."/>
            <person name="Kawai J."/>
            <person name="Hayashizaki Y."/>
        </authorList>
    </citation>
    <scope>NUCLEOTIDE SEQUENCE [LARGE SCALE MRNA] (ISOFORMS 1; 2 AND 3)</scope>
    <source>
        <strain>C57BL/6J</strain>
        <tissue>Pituitary</tissue>
        <tissue>Skin</tissue>
        <tissue>Thymus</tissue>
    </source>
</reference>
<reference key="2">
    <citation type="journal article" date="2009" name="PLoS Biol.">
        <title>Lineage-specific biology revealed by a finished genome assembly of the mouse.</title>
        <authorList>
            <person name="Church D.M."/>
            <person name="Goodstadt L."/>
            <person name="Hillier L.W."/>
            <person name="Zody M.C."/>
            <person name="Goldstein S."/>
            <person name="She X."/>
            <person name="Bult C.J."/>
            <person name="Agarwala R."/>
            <person name="Cherry J.L."/>
            <person name="DiCuccio M."/>
            <person name="Hlavina W."/>
            <person name="Kapustin Y."/>
            <person name="Meric P."/>
            <person name="Maglott D."/>
            <person name="Birtle Z."/>
            <person name="Marques A.C."/>
            <person name="Graves T."/>
            <person name="Zhou S."/>
            <person name="Teague B."/>
            <person name="Potamousis K."/>
            <person name="Churas C."/>
            <person name="Place M."/>
            <person name="Herschleb J."/>
            <person name="Runnheim R."/>
            <person name="Forrest D."/>
            <person name="Amos-Landgraf J."/>
            <person name="Schwartz D.C."/>
            <person name="Cheng Z."/>
            <person name="Lindblad-Toh K."/>
            <person name="Eichler E.E."/>
            <person name="Ponting C.P."/>
        </authorList>
    </citation>
    <scope>NUCLEOTIDE SEQUENCE [LARGE SCALE GENOMIC DNA]</scope>
    <source>
        <strain>C57BL/6J</strain>
    </source>
</reference>
<reference key="3">
    <citation type="journal article" date="2004" name="Genome Res.">
        <title>The status, quality, and expansion of the NIH full-length cDNA project: the Mammalian Gene Collection (MGC).</title>
        <authorList>
            <consortium name="The MGC Project Team"/>
        </authorList>
    </citation>
    <scope>NUCLEOTIDE SEQUENCE [LARGE SCALE MRNA] (ISOFORM 1)</scope>
    <source>
        <strain>FVB/N</strain>
        <tissue>Liver</tissue>
        <tissue>Mammary tumor</tissue>
    </source>
</reference>
<reference key="4">
    <citation type="journal article" date="2024" name="EMBO Rep.">
        <title>Deletion of Tmem268 in mice suppresses anti-infectious immune responses by downregulating CD11b signaling.</title>
        <authorList>
            <person name="Duan M."/>
            <person name="Zhang X."/>
            <person name="Lou Y."/>
            <person name="Feng J."/>
            <person name="Guo P."/>
            <person name="Ye S."/>
            <person name="Lv P."/>
            <person name="Chen Y."/>
        </authorList>
    </citation>
    <scope>DISRUPTION PHENOTYPE</scope>
</reference>
<evidence type="ECO:0000250" key="1">
    <source>
        <dbReference type="UniProtKB" id="Q5VZI3"/>
    </source>
</evidence>
<evidence type="ECO:0000255" key="2"/>
<evidence type="ECO:0000256" key="3">
    <source>
        <dbReference type="SAM" id="MobiDB-lite"/>
    </source>
</evidence>
<evidence type="ECO:0000269" key="4">
    <source>
    </source>
</evidence>
<evidence type="ECO:0000303" key="5">
    <source>
    </source>
</evidence>
<evidence type="ECO:0000305" key="6"/>
<evidence type="ECO:0000312" key="7">
    <source>
        <dbReference type="MGI" id="MGI:1913920"/>
    </source>
</evidence>
<feature type="chain" id="PRO_0000279426" description="Transmembrane protein 268">
    <location>
        <begin position="1"/>
        <end position="342"/>
    </location>
</feature>
<feature type="transmembrane region" description="Helical" evidence="2">
    <location>
        <begin position="106"/>
        <end position="126"/>
    </location>
</feature>
<feature type="transmembrane region" description="Helical" evidence="2">
    <location>
        <begin position="133"/>
        <end position="153"/>
    </location>
</feature>
<feature type="region of interest" description="Disordered" evidence="3">
    <location>
        <begin position="245"/>
        <end position="267"/>
    </location>
</feature>
<feature type="splice variant" id="VSP_023428" description="In isoform 3." evidence="5">
    <original>MACEPPTDPGGAAGPLPTSTLGCNILPQGNPPGWGQELHNGQVLTVLRIDNTCAPISFDL</original>
    <variation>MARSSQSSGSTIPVHLSPLTW</variation>
    <location>
        <begin position="1"/>
        <end position="60"/>
    </location>
</feature>
<feature type="splice variant" id="VSP_023429" description="In isoform 2." evidence="5">
    <original>ANTNTDLRLVAANGALLRHRVLLGVTDTVEGCQSVIQLWFVYFDL</original>
    <variation>EAGVFPPPYTRSRDRPGKTQQTRIFCGKTLLLTSSGASVQAPNPK</variation>
    <location>
        <begin position="160"/>
        <end position="204"/>
    </location>
</feature>
<feature type="splice variant" id="VSP_023430" description="In isoform 2." evidence="5">
    <location>
        <begin position="205"/>
        <end position="342"/>
    </location>
</feature>
<feature type="sequence conflict" description="In Ref. 1; BAE26173." evidence="6" ref="1">
    <original>IL</original>
    <variation>TM</variation>
    <location>
        <begin position="25"/>
        <end position="26"/>
    </location>
</feature>
<feature type="sequence conflict" description="In Ref. 1; BAC26975." evidence="6" ref="1">
    <original>I</original>
    <variation>M</variation>
    <location>
        <position position="119"/>
    </location>
</feature>
<sequence length="342" mass="37763">MACEPPTDPGGAAGPLPTSTLGCNILPQGNPPGWGQELHNGQVLTVLRIDNTCAPISFDLGAAEEQLQAWGIQVPAEQYRNLAESALLEPQVRRYIIYNSRPMRLAFAVVFYVLVWANIYSTSQMFALGNQWAGVLLATLAAFSLTLTLVLVFERQQRKANTNTDLRLVAANGALLRHRVLLGVTDTVEGCQSVIQLWFVYFDLENCVQFLSDHVQEMKRSQESLLRSRLSQLCVVMETGVSPVVEGPEDLEDAPLLPSTPGPQERPLTQTELYQLVPEAEPEEMARQLLAVFGGYYTRLLVTSRLPQSMGTRHMDSARIPCPCQLIEVHVLGTGCCPFLAR</sequence>
<accession>Q8R239</accession>
<accession>Q3TTV3</accession>
<accession>Q3UMC5</accession>
<accession>Q80VW1</accession>
<accession>Q80VW2</accession>
<accession>Q8BMN2</accession>
<accession>Q8C0I7</accession>
<accession>Q8CIJ7</accession>